<reference key="1">
    <citation type="journal article" date="1998" name="Proc. Natl. Acad. Sci. U.S.A.">
        <title>Identification of a gene encoding an acyl CoA:diacylglycerol acyltransferase, a key enzyme in triacylglycerol synthesis.</title>
        <authorList>
            <person name="Cases S."/>
            <person name="Smith S.J."/>
            <person name="Zheng Y.-W."/>
            <person name="Myers H.M."/>
            <person name="Lear S.R."/>
            <person name="Sande E."/>
            <person name="Novak S."/>
            <person name="Collins C."/>
            <person name="Welch C.B."/>
            <person name="Lusis A.J."/>
            <person name="Erickson S.K."/>
            <person name="Farese R.V. Jr."/>
        </authorList>
    </citation>
    <scope>NUCLEOTIDE SEQUENCE [MRNA]</scope>
    <scope>CATALYTIC ACTIVITY</scope>
    <source>
        <strain>C57BL/6J</strain>
    </source>
</reference>
<reference key="2">
    <citation type="journal article" date="2005" name="Science">
        <title>The transcriptional landscape of the mammalian genome.</title>
        <authorList>
            <person name="Carninci P."/>
            <person name="Kasukawa T."/>
            <person name="Katayama S."/>
            <person name="Gough J."/>
            <person name="Frith M.C."/>
            <person name="Maeda N."/>
            <person name="Oyama R."/>
            <person name="Ravasi T."/>
            <person name="Lenhard B."/>
            <person name="Wells C."/>
            <person name="Kodzius R."/>
            <person name="Shimokawa K."/>
            <person name="Bajic V.B."/>
            <person name="Brenner S.E."/>
            <person name="Batalov S."/>
            <person name="Forrest A.R."/>
            <person name="Zavolan M."/>
            <person name="Davis M.J."/>
            <person name="Wilming L.G."/>
            <person name="Aidinis V."/>
            <person name="Allen J.E."/>
            <person name="Ambesi-Impiombato A."/>
            <person name="Apweiler R."/>
            <person name="Aturaliya R.N."/>
            <person name="Bailey T.L."/>
            <person name="Bansal M."/>
            <person name="Baxter L."/>
            <person name="Beisel K.W."/>
            <person name="Bersano T."/>
            <person name="Bono H."/>
            <person name="Chalk A.M."/>
            <person name="Chiu K.P."/>
            <person name="Choudhary V."/>
            <person name="Christoffels A."/>
            <person name="Clutterbuck D.R."/>
            <person name="Crowe M.L."/>
            <person name="Dalla E."/>
            <person name="Dalrymple B.P."/>
            <person name="de Bono B."/>
            <person name="Della Gatta G."/>
            <person name="di Bernardo D."/>
            <person name="Down T."/>
            <person name="Engstrom P."/>
            <person name="Fagiolini M."/>
            <person name="Faulkner G."/>
            <person name="Fletcher C.F."/>
            <person name="Fukushima T."/>
            <person name="Furuno M."/>
            <person name="Futaki S."/>
            <person name="Gariboldi M."/>
            <person name="Georgii-Hemming P."/>
            <person name="Gingeras T.R."/>
            <person name="Gojobori T."/>
            <person name="Green R.E."/>
            <person name="Gustincich S."/>
            <person name="Harbers M."/>
            <person name="Hayashi Y."/>
            <person name="Hensch T.K."/>
            <person name="Hirokawa N."/>
            <person name="Hill D."/>
            <person name="Huminiecki L."/>
            <person name="Iacono M."/>
            <person name="Ikeo K."/>
            <person name="Iwama A."/>
            <person name="Ishikawa T."/>
            <person name="Jakt M."/>
            <person name="Kanapin A."/>
            <person name="Katoh M."/>
            <person name="Kawasawa Y."/>
            <person name="Kelso J."/>
            <person name="Kitamura H."/>
            <person name="Kitano H."/>
            <person name="Kollias G."/>
            <person name="Krishnan S.P."/>
            <person name="Kruger A."/>
            <person name="Kummerfeld S.K."/>
            <person name="Kurochkin I.V."/>
            <person name="Lareau L.F."/>
            <person name="Lazarevic D."/>
            <person name="Lipovich L."/>
            <person name="Liu J."/>
            <person name="Liuni S."/>
            <person name="McWilliam S."/>
            <person name="Madan Babu M."/>
            <person name="Madera M."/>
            <person name="Marchionni L."/>
            <person name="Matsuda H."/>
            <person name="Matsuzawa S."/>
            <person name="Miki H."/>
            <person name="Mignone F."/>
            <person name="Miyake S."/>
            <person name="Morris K."/>
            <person name="Mottagui-Tabar S."/>
            <person name="Mulder N."/>
            <person name="Nakano N."/>
            <person name="Nakauchi H."/>
            <person name="Ng P."/>
            <person name="Nilsson R."/>
            <person name="Nishiguchi S."/>
            <person name="Nishikawa S."/>
            <person name="Nori F."/>
            <person name="Ohara O."/>
            <person name="Okazaki Y."/>
            <person name="Orlando V."/>
            <person name="Pang K.C."/>
            <person name="Pavan W.J."/>
            <person name="Pavesi G."/>
            <person name="Pesole G."/>
            <person name="Petrovsky N."/>
            <person name="Piazza S."/>
            <person name="Reed J."/>
            <person name="Reid J.F."/>
            <person name="Ring B.Z."/>
            <person name="Ringwald M."/>
            <person name="Rost B."/>
            <person name="Ruan Y."/>
            <person name="Salzberg S.L."/>
            <person name="Sandelin A."/>
            <person name="Schneider C."/>
            <person name="Schoenbach C."/>
            <person name="Sekiguchi K."/>
            <person name="Semple C.A."/>
            <person name="Seno S."/>
            <person name="Sessa L."/>
            <person name="Sheng Y."/>
            <person name="Shibata Y."/>
            <person name="Shimada H."/>
            <person name="Shimada K."/>
            <person name="Silva D."/>
            <person name="Sinclair B."/>
            <person name="Sperling S."/>
            <person name="Stupka E."/>
            <person name="Sugiura K."/>
            <person name="Sultana R."/>
            <person name="Takenaka Y."/>
            <person name="Taki K."/>
            <person name="Tammoja K."/>
            <person name="Tan S.L."/>
            <person name="Tang S."/>
            <person name="Taylor M.S."/>
            <person name="Tegner J."/>
            <person name="Teichmann S.A."/>
            <person name="Ueda H.R."/>
            <person name="van Nimwegen E."/>
            <person name="Verardo R."/>
            <person name="Wei C.L."/>
            <person name="Yagi K."/>
            <person name="Yamanishi H."/>
            <person name="Zabarovsky E."/>
            <person name="Zhu S."/>
            <person name="Zimmer A."/>
            <person name="Hide W."/>
            <person name="Bult C."/>
            <person name="Grimmond S.M."/>
            <person name="Teasdale R.D."/>
            <person name="Liu E.T."/>
            <person name="Brusic V."/>
            <person name="Quackenbush J."/>
            <person name="Wahlestedt C."/>
            <person name="Mattick J.S."/>
            <person name="Hume D.A."/>
            <person name="Kai C."/>
            <person name="Sasaki D."/>
            <person name="Tomaru Y."/>
            <person name="Fukuda S."/>
            <person name="Kanamori-Katayama M."/>
            <person name="Suzuki M."/>
            <person name="Aoki J."/>
            <person name="Arakawa T."/>
            <person name="Iida J."/>
            <person name="Imamura K."/>
            <person name="Itoh M."/>
            <person name="Kato T."/>
            <person name="Kawaji H."/>
            <person name="Kawagashira N."/>
            <person name="Kawashima T."/>
            <person name="Kojima M."/>
            <person name="Kondo S."/>
            <person name="Konno H."/>
            <person name="Nakano K."/>
            <person name="Ninomiya N."/>
            <person name="Nishio T."/>
            <person name="Okada M."/>
            <person name="Plessy C."/>
            <person name="Shibata K."/>
            <person name="Shiraki T."/>
            <person name="Suzuki S."/>
            <person name="Tagami M."/>
            <person name="Waki K."/>
            <person name="Watahiki A."/>
            <person name="Okamura-Oho Y."/>
            <person name="Suzuki H."/>
            <person name="Kawai J."/>
            <person name="Hayashizaki Y."/>
        </authorList>
    </citation>
    <scope>NUCLEOTIDE SEQUENCE [LARGE SCALE MRNA]</scope>
    <source>
        <strain>C57BL/6J</strain>
        <tissue>Tongue</tissue>
    </source>
</reference>
<reference key="3">
    <citation type="journal article" date="2004" name="Genome Res.">
        <title>The status, quality, and expansion of the NIH full-length cDNA project: the Mammalian Gene Collection (MGC).</title>
        <authorList>
            <consortium name="The MGC Project Team"/>
        </authorList>
    </citation>
    <scope>NUCLEOTIDE SEQUENCE [LARGE SCALE MRNA]</scope>
</reference>
<reference key="4">
    <citation type="journal article" date="2000" name="Nat. Genet.">
        <title>Obesity resistance and multiple mechanisms of triglyceride synthesis in mice lacking Dgat.</title>
        <authorList>
            <person name="Smith S.J."/>
            <person name="Cases S."/>
            <person name="Jensen D.R."/>
            <person name="Chen H.C."/>
            <person name="Sande E."/>
            <person name="Tow B."/>
            <person name="Sanan D.A."/>
            <person name="Raber J."/>
            <person name="Eckel R.H."/>
            <person name="Farese R.V. Jr."/>
        </authorList>
    </citation>
    <scope>DISRUPTION PHENOTYPE</scope>
</reference>
<reference key="5">
    <citation type="journal article" date="2002" name="J. Biol. Chem.">
        <title>DGAT1 is not essential for intestinal triacylglycerol absorption or chylomicron synthesis.</title>
        <authorList>
            <person name="Buhman K.K."/>
            <person name="Smith S.J."/>
            <person name="Stone S.J."/>
            <person name="Repa J.J."/>
            <person name="Wong J.S."/>
            <person name="Knapp F.F.R. Jr."/>
            <person name="Burri B.J."/>
            <person name="Hamilton R.L."/>
            <person name="Abumrad N.A."/>
            <person name="Farese R.V. Jr."/>
        </authorList>
    </citation>
    <scope>FUNCTION</scope>
    <scope>DISRUPTION PHENOTYPE</scope>
</reference>
<reference key="6">
    <citation type="journal article" date="2002" name="J. Clin. Invest.">
        <title>Increased insulin and leptin sensitivity in mice lacking acyl CoA:diacylglycerol acyltransferase 1.</title>
        <authorList>
            <person name="Chen H.C."/>
            <person name="Smith S.J."/>
            <person name="Ladha Z."/>
            <person name="Jensen D.R."/>
            <person name="Ferreira L.D."/>
            <person name="Pulawa L.K."/>
            <person name="McGuire J.G."/>
            <person name="Pitas R.E."/>
            <person name="Eckel R.H."/>
            <person name="Farese R.V. Jr."/>
        </authorList>
    </citation>
    <scope>DISRUPTION PHENOTYPE</scope>
</reference>
<reference key="7">
    <citation type="journal article" date="2009" name="J. Biol. Chem.">
        <title>Retinol esterification by DGAT1 is essential for retinoid homeostasis in murine skin.</title>
        <authorList>
            <person name="Shih M.Y."/>
            <person name="Kane M.A."/>
            <person name="Zhou P."/>
            <person name="Yen C.L."/>
            <person name="Streeper R.S."/>
            <person name="Napoli J.L."/>
            <person name="Farese R.V. Jr."/>
        </authorList>
    </citation>
    <scope>CATALYTIC ACTIVITY</scope>
    <scope>FUNCTION</scope>
</reference>
<reference key="8">
    <citation type="journal article" date="2010" name="Cell">
        <title>A tissue-specific atlas of mouse protein phosphorylation and expression.</title>
        <authorList>
            <person name="Huttlin E.L."/>
            <person name="Jedrychowski M.P."/>
            <person name="Elias J.E."/>
            <person name="Goswami T."/>
            <person name="Rad R."/>
            <person name="Beausoleil S.A."/>
            <person name="Villen J."/>
            <person name="Haas W."/>
            <person name="Sowa M.E."/>
            <person name="Gygi S.P."/>
        </authorList>
    </citation>
    <scope>IDENTIFICATION BY MASS SPECTROMETRY [LARGE SCALE ANALYSIS]</scope>
    <source>
        <tissue>Brown adipose tissue</tissue>
        <tissue>Liver</tissue>
    </source>
</reference>
<reference key="9">
    <citation type="journal article" date="2005" name="J. Lipid Res.">
        <title>The triacylglycerol synthesis enzyme DGAT1 also catalyzes the synthesis of diacylglycerols, waxes, and retinyl esters.</title>
        <authorList>
            <person name="Yen C.L."/>
            <person name="Monetti M."/>
            <person name="Burri B.J."/>
            <person name="Farese R.V. Jr."/>
        </authorList>
    </citation>
    <scope>CATALYTIC ACTIVITY</scope>
    <scope>FUNCTION</scope>
</reference>
<reference key="10">
    <citation type="journal article" date="2005" name="J. Lipid Res.">
        <title>A human skin multifunctional O-acyltransferase that catalyzes the synthesis of acylglycerols, waxes, and retinyl esters.</title>
        <authorList>
            <person name="Yen C.-L.E."/>
            <person name="Brown C.H. IV"/>
            <person name="Monetti M."/>
            <person name="Farese R.V. Jr."/>
        </authorList>
    </citation>
    <scope>CATALYTIC ACTIVITY</scope>
</reference>
<reference key="11">
    <citation type="journal article" date="2010" name="J. Biol. Chem.">
        <title>Acyl CoA:diacylglycerol acyltransferase-1 (DGAT1): topological orientation, identification of a putative active site histidine and the role of the N-terminus in dimer/tetramer formation.</title>
        <authorList>
            <person name="McFie P.J."/>
            <person name="Stone S.L."/>
            <person name="Banman S.L."/>
            <person name="Stone S.J."/>
        </authorList>
    </citation>
    <scope>MUTAGENESIS OF HIS-426</scope>
    <scope>SUBUNIT</scope>
    <scope>CATALYTIC ACTIVITY</scope>
    <scope>SUBCELLULAR LOCATION</scope>
    <scope>FUNCTION</scope>
</reference>
<reference key="12">
    <citation type="journal article" date="2012" name="J. Lipid Res.">
        <title>The use of stable isotope-labeled glycerol and oleic acid to differentiate the hepatic functions of DGAT1 and -2.</title>
        <authorList>
            <person name="Qi J."/>
            <person name="Lang W."/>
            <person name="Geisler J.G."/>
            <person name="Wang P."/>
            <person name="Petrounia I."/>
            <person name="Mai S."/>
            <person name="Smith C."/>
            <person name="Askari H."/>
            <person name="Struble G.T."/>
            <person name="Williams R."/>
            <person name="Bhanot S."/>
            <person name="Monia B.P."/>
            <person name="Bayoumy S."/>
            <person name="Grant E."/>
            <person name="Caldwell G.W."/>
            <person name="Todd M.J."/>
            <person name="Liang Y."/>
            <person name="Gaul M.D."/>
            <person name="Demarest K.T."/>
            <person name="Connelly M.A."/>
        </authorList>
    </citation>
    <scope>FUNCTION</scope>
</reference>
<reference key="13">
    <citation type="journal article" date="2012" name="J. Biol. Chem.">
        <title>Studies on the substrate and stereo/regioselectivity of adipose triglyceride lipase, hormone-sensitive lipase, and diacylglycerol-O-acyltransferases.</title>
        <authorList>
            <person name="Eichmann T.O."/>
            <person name="Kumari M."/>
            <person name="Haas J.T."/>
            <person name="Farese R.V. Jr."/>
            <person name="Zimmermann R."/>
            <person name="Lass A."/>
            <person name="Zechner R."/>
        </authorList>
    </citation>
    <scope>CATALYTIC ACTIVITY</scope>
</reference>
<reference key="14">
    <citation type="journal article" date="2017" name="J. Lipid Res.">
        <title>Synthesis of neutral ether lipid monoalkyl-diacylglycerol by lipid acyltransferases.</title>
        <authorList>
            <person name="Ma Z."/>
            <person name="Onorato J.M."/>
            <person name="Chen L."/>
            <person name="Nelson D.W."/>
            <person name="Yen C.E."/>
            <person name="Cheng D."/>
        </authorList>
    </citation>
    <scope>CATALYTIC ACTIVITY</scope>
    <scope>FUNCTION</scope>
    <scope>DISRUPTION PHENOTYPE</scope>
</reference>
<proteinExistence type="evidence at protein level"/>
<evidence type="ECO:0000250" key="1">
    <source>
        <dbReference type="UniProtKB" id="O75907"/>
    </source>
</evidence>
<evidence type="ECO:0000250" key="2">
    <source>
        <dbReference type="UniProtKB" id="Q8MK44"/>
    </source>
</evidence>
<evidence type="ECO:0000269" key="3">
    <source>
    </source>
</evidence>
<evidence type="ECO:0000269" key="4">
    <source>
    </source>
</evidence>
<evidence type="ECO:0000269" key="5">
    <source>
    </source>
</evidence>
<evidence type="ECO:0000269" key="6">
    <source>
    </source>
</evidence>
<evidence type="ECO:0000269" key="7">
    <source>
    </source>
</evidence>
<evidence type="ECO:0000269" key="8">
    <source>
    </source>
</evidence>
<evidence type="ECO:0000269" key="9">
    <source>
    </source>
</evidence>
<evidence type="ECO:0000269" key="10">
    <source>
    </source>
</evidence>
<evidence type="ECO:0000269" key="11">
    <source>
    </source>
</evidence>
<evidence type="ECO:0000269" key="12">
    <source>
    </source>
</evidence>
<evidence type="ECO:0000269" key="13">
    <source>
    </source>
</evidence>
<evidence type="ECO:0000303" key="14">
    <source>
    </source>
</evidence>
<evidence type="ECO:0000303" key="15">
    <source>
    </source>
</evidence>
<evidence type="ECO:0000303" key="16">
    <source>
    </source>
</evidence>
<evidence type="ECO:0000303" key="17">
    <source>
    </source>
</evidence>
<evidence type="ECO:0000305" key="18"/>
<evidence type="ECO:0000305" key="19">
    <source>
    </source>
</evidence>
<evidence type="ECO:0000305" key="20">
    <source>
    </source>
</evidence>
<evidence type="ECO:0000305" key="21">
    <source>
    </source>
</evidence>
<evidence type="ECO:0000305" key="22">
    <source>
    </source>
</evidence>
<evidence type="ECO:0000305" key="23">
    <source>
    </source>
</evidence>
<evidence type="ECO:0000312" key="24">
    <source>
        <dbReference type="MGI" id="MGI:1333825"/>
    </source>
</evidence>
<protein>
    <recommendedName>
        <fullName evidence="18">Diacylglycerol O-acyltransferase 1</fullName>
        <ecNumber evidence="8 9">2.3.1.20</ecNumber>
    </recommendedName>
    <alternativeName>
        <fullName evidence="16">Acyl-CoA retinol O-fatty-acyltransferase</fullName>
        <shortName evidence="16">ARAT</shortName>
        <shortName evidence="16">Retinol O-fatty-acyltransferase</shortName>
        <ecNumber evidence="8 9">2.3.1.76</ecNumber>
    </alternativeName>
    <alternativeName>
        <fullName>Diglyceride acyltransferase</fullName>
    </alternativeName>
</protein>
<feature type="chain" id="PRO_0000207655" description="Diacylglycerol O-acyltransferase 1">
    <location>
        <begin position="1"/>
        <end position="498"/>
    </location>
</feature>
<feature type="topological domain" description="Cytoplasmic" evidence="18">
    <location>
        <begin position="1"/>
        <end position="92"/>
    </location>
</feature>
<feature type="transmembrane region" description="Helical; Name=1" evidence="1">
    <location>
        <begin position="93"/>
        <end position="127"/>
    </location>
</feature>
<feature type="topological domain" description="Lumenal" evidence="18">
    <location>
        <begin position="128"/>
        <end position="139"/>
    </location>
</feature>
<feature type="transmembrane region" description="Helical; Name=2" evidence="1">
    <location>
        <begin position="140"/>
        <end position="165"/>
    </location>
</feature>
<feature type="topological domain" description="Cytoplasmic" evidence="18">
    <location>
        <begin position="166"/>
        <end position="170"/>
    </location>
</feature>
<feature type="transmembrane region" description="Helical; Name=3" evidence="1">
    <location>
        <begin position="171"/>
        <end position="193"/>
    </location>
</feature>
<feature type="topological domain" description="Lumenal" evidence="18">
    <location>
        <begin position="194"/>
        <end position="200"/>
    </location>
</feature>
<feature type="transmembrane region" description="Helical; Name=4" evidence="1">
    <location>
        <begin position="201"/>
        <end position="232"/>
    </location>
</feature>
<feature type="topological domain" description="Cytoplasmic" evidence="18">
    <location>
        <begin position="233"/>
        <end position="284"/>
    </location>
</feature>
<feature type="transmembrane region" description="Helical; Name=5" evidence="1">
    <location>
        <begin position="285"/>
        <end position="319"/>
    </location>
</feature>
<feature type="topological domain" description="Lumenal" evidence="18">
    <location>
        <begin position="320"/>
        <end position="326"/>
    </location>
</feature>
<feature type="transmembrane region" description="Helical; Name=6" evidence="1">
    <location>
        <begin position="327"/>
        <end position="364"/>
    </location>
</feature>
<feature type="topological domain" description="Cytoplasmic" evidence="18">
    <location>
        <begin position="365"/>
        <end position="410"/>
    </location>
</feature>
<feature type="transmembrane region" description="Helical; Name=7" evidence="1">
    <location>
        <begin position="411"/>
        <end position="431"/>
    </location>
</feature>
<feature type="topological domain" description="Lumenal" evidence="18">
    <location>
        <begin position="432"/>
        <end position="439"/>
    </location>
</feature>
<feature type="transmembrane region" description="Helical; Name=8" evidence="1">
    <location>
        <begin position="440"/>
        <end position="458"/>
    </location>
</feature>
<feature type="topological domain" description="Cytoplasmic" evidence="18">
    <location>
        <begin position="459"/>
        <end position="460"/>
    </location>
</feature>
<feature type="transmembrane region" description="Helical; Name=9" evidence="1">
    <location>
        <begin position="461"/>
        <end position="492"/>
    </location>
</feature>
<feature type="topological domain" description="Lumenal" evidence="18">
    <location>
        <begin position="493"/>
        <end position="498"/>
    </location>
</feature>
<feature type="region of interest" description="Involved in homomerization" evidence="9">
    <location>
        <begin position="1"/>
        <end position="100"/>
    </location>
</feature>
<feature type="region of interest" description="Disordered" evidence="1">
    <location>
        <begin position="1"/>
        <end position="66"/>
    </location>
</feature>
<feature type="region of interest" description="Extracellular loop 1 (EL1)" evidence="1">
    <location>
        <begin position="128"/>
        <end position="139"/>
    </location>
</feature>
<feature type="region of interest" description="MBOAT fold" evidence="1">
    <location>
        <begin position="140"/>
        <end position="498"/>
    </location>
</feature>
<feature type="region of interest" description="Intracellular loop 1 (IL1)" evidence="1">
    <location>
        <begin position="235"/>
        <end position="287"/>
    </location>
</feature>
<feature type="region of interest" description="Intracellular loop 2 (IL2)" evidence="1">
    <location>
        <begin position="365"/>
        <end position="410"/>
    </location>
</feature>
<feature type="region of interest" description="Amphipathic helix (AH)" evidence="1">
    <location>
        <begin position="391"/>
        <end position="405"/>
    </location>
</feature>
<feature type="short sequence motif" description="FYXDWWN motif" evidence="1">
    <location>
        <begin position="371"/>
        <end position="377"/>
    </location>
</feature>
<feature type="active site" evidence="21">
    <location>
        <position position="426"/>
    </location>
</feature>
<feature type="binding site" evidence="1">
    <location>
        <begin position="385"/>
        <end position="393"/>
    </location>
    <ligand>
        <name>an acyl-CoA</name>
        <dbReference type="ChEBI" id="CHEBI:58342"/>
    </ligand>
</feature>
<feature type="binding site" evidence="1">
    <location>
        <position position="401"/>
    </location>
    <ligand>
        <name>an acyl-CoA</name>
        <dbReference type="ChEBI" id="CHEBI:58342"/>
    </ligand>
</feature>
<feature type="binding site" evidence="1">
    <location>
        <position position="415"/>
    </location>
    <ligand>
        <name>an acyl-CoA</name>
        <dbReference type="ChEBI" id="CHEBI:58342"/>
    </ligand>
</feature>
<feature type="binding site" evidence="1">
    <location>
        <position position="488"/>
    </location>
    <ligand>
        <name>an acyl-CoA</name>
        <dbReference type="ChEBI" id="CHEBI:58342"/>
    </ligand>
</feature>
<feature type="site" description="Important for catalytic activity" evidence="1">
    <location>
        <position position="427"/>
    </location>
</feature>
<feature type="modified residue" description="Phosphoserine" evidence="1">
    <location>
        <position position="20"/>
    </location>
</feature>
<feature type="mutagenesis site" description="Impairs the ability to synthesize triacylglycerols, as well as retinyl and wax esters, in an in vitro acyltransferase assay." evidence="9">
    <original>H</original>
    <variation>A</variation>
    <location>
        <position position="426"/>
    </location>
</feature>
<organism>
    <name type="scientific">Mus musculus</name>
    <name type="common">Mouse</name>
    <dbReference type="NCBI Taxonomy" id="10090"/>
    <lineage>
        <taxon>Eukaryota</taxon>
        <taxon>Metazoa</taxon>
        <taxon>Chordata</taxon>
        <taxon>Craniata</taxon>
        <taxon>Vertebrata</taxon>
        <taxon>Euteleostomi</taxon>
        <taxon>Mammalia</taxon>
        <taxon>Eutheria</taxon>
        <taxon>Euarchontoglires</taxon>
        <taxon>Glires</taxon>
        <taxon>Rodentia</taxon>
        <taxon>Myomorpha</taxon>
        <taxon>Muroidea</taxon>
        <taxon>Muridae</taxon>
        <taxon>Murinae</taxon>
        <taxon>Mus</taxon>
        <taxon>Mus</taxon>
    </lineage>
</organism>
<keyword id="KW-0012">Acyltransferase</keyword>
<keyword id="KW-0256">Endoplasmic reticulum</keyword>
<keyword id="KW-0443">Lipid metabolism</keyword>
<keyword id="KW-0472">Membrane</keyword>
<keyword id="KW-0597">Phosphoprotein</keyword>
<keyword id="KW-1185">Reference proteome</keyword>
<keyword id="KW-0808">Transferase</keyword>
<keyword id="KW-0812">Transmembrane</keyword>
<keyword id="KW-1133">Transmembrane helix</keyword>
<name>DGAT1_MOUSE</name>
<sequence length="498" mass="56790">MGDRGGAGSSRRRRTGSRVSVQGGSGPKVEEDEVRDAAVSPDLGAGGDAPAPAPAPAHTRDKDGRTSVGDGYWDLRCHRLQDSLFSSDSGFSNYRGILNWCVVMLILSNARLFLENLIKYGILVDPIQVVSLFLKDPYSWPAPCVIIASNIFVVAAFQIEKRLAVGALTEQMGLLLHVVNLATIICFPAAVALLVESITPVGSVFALASYSIMFLKLYSYRDVNLWCRQRRVKAKAVSTGKKVSGAAAQQAVSYPDNLTYRDLYYFIFAPTLCYELNFPRSPRIRKRFLLRRVLEMLFFTQLQVGLIQQWMVPTIQNSMKPFKDMDYSRIIERLLKLAVPNHLIWLIFFYWFFHSCLNAVAELLQFGDREFYRDWWNAESVTYFWQNWNIPVHKWCIRHFYKPMLRHGSSKWVARTGVFLTSAFFHEYLVSVPLRMFRLWAFTAMMAQVPLAWIVGRFFQGNYGNAAVWVTLIIGQPVAVLMYVHDYYVLNYDAPVGV</sequence>
<gene>
    <name evidence="15 24" type="primary">Dgat1</name>
    <name evidence="14 17" type="synonym">Dgat</name>
</gene>
<comment type="function">
    <text evidence="1 2 5 6 8 9 10 12">Catalyzes the terminal and only committed step in triacylglycerol synthesis by using diacylglycerol and fatty acyl CoA as substrates (PubMed:15834126, PubMed:19028692, PubMed:20876538, PubMed:22493088, PubMed:28420705). Highly expressed in epithelial cells of the small intestine and its activity is essential for the absorption of dietary fats (By similarity). In liver, plays a role in esterifying exogenous fatty acids to glycerol, and is required to synthesize fat for storage (PubMed:15834126). Also present in female mammary glands, where it produces fat in the milk (By similarity). May be involved in VLDL (very low density lipoprotein) assembly (By similarity). In contrast to DGAT2 it is not essential for survival (PubMed:11959864). Functions as the major acyl-CoA retinol acyltransferase (ARAT) in the skin, where it acts to maintain retinoid homeostasis and prevent retinoid toxicity leading to skin and hair disorders (PubMed:19028692). Exhibits additional acyltransferase activities, includin acyl CoA:monoacylglycerol acyltransferase (MGAT), wax monoester and wax diester synthases (PubMed:15834126). Also able to use 1-monoalkylglycerol (1-MAkG) as an acyl acceptor for the synthesis of monoalkyl-monoacylglycerol (MAMAG) (PubMed:28420705).</text>
</comment>
<comment type="catalytic activity">
    <reaction evidence="8 9">
        <text>an acyl-CoA + a 1,2-diacyl-sn-glycerol = a triacyl-sn-glycerol + CoA</text>
        <dbReference type="Rhea" id="RHEA:10868"/>
        <dbReference type="ChEBI" id="CHEBI:17815"/>
        <dbReference type="ChEBI" id="CHEBI:57287"/>
        <dbReference type="ChEBI" id="CHEBI:58342"/>
        <dbReference type="ChEBI" id="CHEBI:64615"/>
        <dbReference type="EC" id="2.3.1.20"/>
    </reaction>
    <physiologicalReaction direction="left-to-right" evidence="18">
        <dbReference type="Rhea" id="RHEA:10869"/>
    </physiologicalReaction>
</comment>
<comment type="catalytic activity">
    <reaction evidence="8 9">
        <text>all-trans-retinol + an acyl-CoA = an all-trans-retinyl ester + CoA</text>
        <dbReference type="Rhea" id="RHEA:11488"/>
        <dbReference type="ChEBI" id="CHEBI:17336"/>
        <dbReference type="ChEBI" id="CHEBI:57287"/>
        <dbReference type="ChEBI" id="CHEBI:58342"/>
        <dbReference type="ChEBI" id="CHEBI:63410"/>
        <dbReference type="EC" id="2.3.1.76"/>
    </reaction>
    <physiologicalReaction direction="left-to-right" evidence="18">
        <dbReference type="Rhea" id="RHEA:11489"/>
    </physiologicalReaction>
</comment>
<comment type="catalytic activity">
    <reaction evidence="13">
        <text>1-octadecanoyl-2-(5Z,8Z,11Z,14Z-eicosatetraenoyl)-sn-glycerol + (9Z)-octadecenoyl-CoA = 1-octadecanoyl-2-(5Z,8Z,11Z,14Z)-eicosatetraenoyl-3-(9Z)-octadecenoyl-sn-glycerol + CoA</text>
        <dbReference type="Rhea" id="RHEA:38307"/>
        <dbReference type="ChEBI" id="CHEBI:57287"/>
        <dbReference type="ChEBI" id="CHEBI:57387"/>
        <dbReference type="ChEBI" id="CHEBI:75728"/>
        <dbReference type="ChEBI" id="CHEBI:75729"/>
    </reaction>
    <physiologicalReaction direction="left-to-right" evidence="23">
        <dbReference type="Rhea" id="RHEA:38308"/>
    </physiologicalReaction>
</comment>
<comment type="catalytic activity">
    <reaction evidence="6 7">
        <text>hexadecane-1,2-diol + 2 hexadecanoyl-CoA = 1,2-O,O-dihexadecanoyl-1,2-hexadecanediol + 2 CoA</text>
        <dbReference type="Rhea" id="RHEA:38211"/>
        <dbReference type="ChEBI" id="CHEBI:57287"/>
        <dbReference type="ChEBI" id="CHEBI:57379"/>
        <dbReference type="ChEBI" id="CHEBI:75586"/>
        <dbReference type="ChEBI" id="CHEBI:75608"/>
    </reaction>
    <physiologicalReaction direction="left-to-right" evidence="19 20">
        <dbReference type="Rhea" id="RHEA:38212"/>
    </physiologicalReaction>
</comment>
<comment type="catalytic activity">
    <reaction evidence="7">
        <text>hexadecane-1,2-diol + hexadecanoyl-CoA = 2-hydroxyhexadecyl hexadecanoate + CoA</text>
        <dbReference type="Rhea" id="RHEA:38171"/>
        <dbReference type="ChEBI" id="CHEBI:57287"/>
        <dbReference type="ChEBI" id="CHEBI:57379"/>
        <dbReference type="ChEBI" id="CHEBI:75586"/>
        <dbReference type="ChEBI" id="CHEBI:75587"/>
    </reaction>
    <physiologicalReaction direction="left-to-right" evidence="20">
        <dbReference type="Rhea" id="RHEA:38172"/>
    </physiologicalReaction>
</comment>
<comment type="catalytic activity">
    <reaction evidence="6 7">
        <text>2-(9Z-octadecenoyl)-glycerol + hexadecanoyl-CoA = 1-hexadecanoyl-2-(9Z-octadecenoyl)-sn-glycerol + CoA</text>
        <dbReference type="Rhea" id="RHEA:38071"/>
        <dbReference type="ChEBI" id="CHEBI:57287"/>
        <dbReference type="ChEBI" id="CHEBI:57379"/>
        <dbReference type="ChEBI" id="CHEBI:73990"/>
        <dbReference type="ChEBI" id="CHEBI:75466"/>
    </reaction>
    <physiologicalReaction direction="left-to-right" evidence="19 20">
        <dbReference type="Rhea" id="RHEA:38072"/>
    </physiologicalReaction>
</comment>
<comment type="catalytic activity">
    <reaction evidence="6 7">
        <text>1,2-di-(9Z-octadecenoyl)-sn-glycerol + hexadecanoyl-CoA = 1,2-di-(9Z)-octadecenoyl-3-hexadecanoyl-sn-glycerol + CoA</text>
        <dbReference type="Rhea" id="RHEA:38163"/>
        <dbReference type="ChEBI" id="CHEBI:52333"/>
        <dbReference type="ChEBI" id="CHEBI:57287"/>
        <dbReference type="ChEBI" id="CHEBI:57379"/>
        <dbReference type="ChEBI" id="CHEBI:75583"/>
    </reaction>
    <physiologicalReaction direction="left-to-right" evidence="19 20">
        <dbReference type="Rhea" id="RHEA:38164"/>
    </physiologicalReaction>
</comment>
<comment type="catalytic activity">
    <reaction evidence="6 7">
        <text>hexadecan-1-ol + hexadecanoyl-CoA = hexadecanyl hexadecanoate + CoA</text>
        <dbReference type="Rhea" id="RHEA:38167"/>
        <dbReference type="ChEBI" id="CHEBI:16125"/>
        <dbReference type="ChEBI" id="CHEBI:57287"/>
        <dbReference type="ChEBI" id="CHEBI:57379"/>
        <dbReference type="ChEBI" id="CHEBI:75584"/>
    </reaction>
    <physiologicalReaction direction="left-to-right" evidence="19 20">
        <dbReference type="Rhea" id="RHEA:38168"/>
    </physiologicalReaction>
</comment>
<comment type="catalytic activity">
    <reaction evidence="6 7">
        <text>all-trans-retinol + hexadecanoyl-CoA = all-trans-retinyl hexadecanoate + CoA</text>
        <dbReference type="Rhea" id="RHEA:38175"/>
        <dbReference type="ChEBI" id="CHEBI:17336"/>
        <dbReference type="ChEBI" id="CHEBI:17616"/>
        <dbReference type="ChEBI" id="CHEBI:57287"/>
        <dbReference type="ChEBI" id="CHEBI:57379"/>
    </reaction>
    <physiologicalReaction direction="left-to-right" evidence="19 20">
        <dbReference type="Rhea" id="RHEA:38176"/>
    </physiologicalReaction>
</comment>
<comment type="catalytic activity">
    <reaction evidence="6">
        <text>13-cis-retinol + hexadecanoyl-CoA = 13-cis-retinyl hexadecanoate + CoA</text>
        <dbReference type="Rhea" id="RHEA:55296"/>
        <dbReference type="ChEBI" id="CHEBI:45479"/>
        <dbReference type="ChEBI" id="CHEBI:57287"/>
        <dbReference type="ChEBI" id="CHEBI:57379"/>
        <dbReference type="ChEBI" id="CHEBI:138722"/>
    </reaction>
    <physiologicalReaction direction="left-to-right" evidence="19">
        <dbReference type="Rhea" id="RHEA:55297"/>
    </physiologicalReaction>
</comment>
<comment type="catalytic activity">
    <reaction evidence="11">
        <text>1,2-di-(9Z-octadecenoyl)-sn-glycerol + (9Z)-octadecenoyl-CoA = 1,2,3-tri-(9Z-octadecenoyl)-glycerol + CoA</text>
        <dbReference type="Rhea" id="RHEA:38219"/>
        <dbReference type="ChEBI" id="CHEBI:52333"/>
        <dbReference type="ChEBI" id="CHEBI:53753"/>
        <dbReference type="ChEBI" id="CHEBI:57287"/>
        <dbReference type="ChEBI" id="CHEBI:57387"/>
    </reaction>
    <physiologicalReaction direction="left-to-right" evidence="22">
        <dbReference type="Rhea" id="RHEA:38220"/>
    </physiologicalReaction>
</comment>
<comment type="catalytic activity">
    <reaction evidence="11">
        <text>1,3-di-(9Z-octadecenoyl)-glycerol + (9Z)-octadecenoyl-CoA = 1,2,3-tri-(9Z-octadecenoyl)-glycerol + CoA</text>
        <dbReference type="Rhea" id="RHEA:38435"/>
        <dbReference type="ChEBI" id="CHEBI:53753"/>
        <dbReference type="ChEBI" id="CHEBI:57287"/>
        <dbReference type="ChEBI" id="CHEBI:57387"/>
        <dbReference type="ChEBI" id="CHEBI:75735"/>
    </reaction>
    <physiologicalReaction direction="left-to-right" evidence="22">
        <dbReference type="Rhea" id="RHEA:38436"/>
    </physiologicalReaction>
</comment>
<comment type="catalytic activity">
    <reaction evidence="11">
        <text>2,3-di-(9Z)-octadecenoyl-sn-glycerol + (9Z)-octadecenoyl-CoA = 1,2,3-tri-(9Z-octadecenoyl)-glycerol + CoA</text>
        <dbReference type="Rhea" id="RHEA:38439"/>
        <dbReference type="ChEBI" id="CHEBI:53753"/>
        <dbReference type="ChEBI" id="CHEBI:57287"/>
        <dbReference type="ChEBI" id="CHEBI:57387"/>
        <dbReference type="ChEBI" id="CHEBI:75824"/>
    </reaction>
    <physiologicalReaction direction="left-to-right" evidence="22">
        <dbReference type="Rhea" id="RHEA:38440"/>
    </physiologicalReaction>
</comment>
<comment type="catalytic activity">
    <reaction evidence="12">
        <text>1-O-(9Z-octadecenyl)-glycerol + (9Z)-octadecenoyl-CoA = 1-O-(9Z-octadecyl)-3-(9Z-octadecenoyl)-glycerol + CoA</text>
        <dbReference type="Rhea" id="RHEA:55340"/>
        <dbReference type="ChEBI" id="CHEBI:34116"/>
        <dbReference type="ChEBI" id="CHEBI:57287"/>
        <dbReference type="ChEBI" id="CHEBI:57387"/>
        <dbReference type="ChEBI" id="CHEBI:197429"/>
    </reaction>
    <physiologicalReaction direction="left-to-right" evidence="12">
        <dbReference type="Rhea" id="RHEA:55341"/>
    </physiologicalReaction>
</comment>
<comment type="catalytic activity">
    <reaction evidence="12">
        <text>1-(9Z-octadecenoyl)-glycerol + (9Z)-octadecenoyl-CoA = 1,2-di-(9Z-octadecenoyl)-glycerol + CoA</text>
        <dbReference type="Rhea" id="RHEA:37915"/>
        <dbReference type="ChEBI" id="CHEBI:52323"/>
        <dbReference type="ChEBI" id="CHEBI:57287"/>
        <dbReference type="ChEBI" id="CHEBI:57387"/>
        <dbReference type="ChEBI" id="CHEBI:75342"/>
    </reaction>
    <physiologicalReaction direction="left-to-right" evidence="12">
        <dbReference type="Rhea" id="RHEA:37916"/>
    </physiologicalReaction>
</comment>
<comment type="catalytic activity">
    <reaction evidence="1">
        <text>2-(9Z-octadecenoyl)-glycerol + (9Z)-octadecenoyl-CoA = 1,2-di-(9Z-octadecenoyl)-sn-glycerol + CoA</text>
        <dbReference type="Rhea" id="RHEA:37911"/>
        <dbReference type="ChEBI" id="CHEBI:52333"/>
        <dbReference type="ChEBI" id="CHEBI:57287"/>
        <dbReference type="ChEBI" id="CHEBI:57387"/>
        <dbReference type="ChEBI" id="CHEBI:73990"/>
    </reaction>
    <physiologicalReaction direction="left-to-right" evidence="1">
        <dbReference type="Rhea" id="RHEA:37912"/>
    </physiologicalReaction>
</comment>
<comment type="catalytic activity">
    <reaction evidence="1">
        <text>1-O-(9Z-octadecyl)-3-(9Z-octadecenoyl)-glycerol + (9Z)-octadecenoyl-CoA = 1-O-(9Z-octadecenyl)-2,3-di-(9Z-octadecenoyl)glycerol + CoA</text>
        <dbReference type="Rhea" id="RHEA:55344"/>
        <dbReference type="ChEBI" id="CHEBI:57287"/>
        <dbReference type="ChEBI" id="CHEBI:57387"/>
        <dbReference type="ChEBI" id="CHEBI:138735"/>
        <dbReference type="ChEBI" id="CHEBI:197429"/>
    </reaction>
    <physiologicalReaction direction="left-to-right" evidence="1">
        <dbReference type="Rhea" id="RHEA:55345"/>
    </physiologicalReaction>
</comment>
<comment type="catalytic activity">
    <reaction evidence="1">
        <text>1,2-di-(9Z-octadecenoyl)-glycerol + (9Z)-octadecenoate + H(+) = 1,2,3-tri-(9Z-octadecenoyl)-glycerol + H2O</text>
        <dbReference type="Rhea" id="RHEA:38379"/>
        <dbReference type="ChEBI" id="CHEBI:15377"/>
        <dbReference type="ChEBI" id="CHEBI:15378"/>
        <dbReference type="ChEBI" id="CHEBI:30823"/>
        <dbReference type="ChEBI" id="CHEBI:52323"/>
        <dbReference type="ChEBI" id="CHEBI:53753"/>
    </reaction>
    <physiologicalReaction direction="left-to-right" evidence="1">
        <dbReference type="Rhea" id="RHEA:38380"/>
    </physiologicalReaction>
</comment>
<comment type="pathway">
    <text>Lipid metabolism; glycerolipid metabolism.</text>
</comment>
<comment type="subunit">
    <text evidence="9">Homodimer or homotetramer; both forms have similar enzymatic activities.</text>
</comment>
<comment type="subcellular location">
    <subcellularLocation>
        <location evidence="9">Endoplasmic reticulum membrane</location>
        <topology evidence="9">Multi-pass membrane protein</topology>
    </subcellularLocation>
</comment>
<comment type="domain">
    <text evidence="1">The disordered N-terminal region is required for the diacylglycerol O-acyltransferase activity and may regulate enzymatic function via its interaction with the MBOAT fold.</text>
</comment>
<comment type="domain">
    <text evidence="1">The MBOAT fold forms a reaction chamber in the endoplasmic reticulum membrane that encloses the active sites. The reaction chamber has a tunnel to the cytosolic side and its entrance recognizes the hydrophilic CoA motif of an acyl-CoA molecule. The chamber has separate entrances for each of the two substrates, acyl-CoA and 1,2-diacyl-sn-glycerol.</text>
</comment>
<comment type="disruption phenotype">
    <text evidence="3 4 5 12">Mice are viable and live well, but show substantially reduced levels of triacylglycerides in all tissues (PubMed:10802663, PubMed:11956242, PubMed:11959864). Mice are resistant to obesity when kept on a high-fat diet due to increased energy expenditure: they display reduced postabsorptive chylomicronemia and accumulate neutral-lipid droplets in the cytoplasm of enterocytes (PubMed:10802663, PubMed:11956242, PubMed:11959864). Mice also show increased sensitivity to insulin and to leptin and are protected against insulin resistance (PubMed:11956242). Mutant mice show reduced levels of monoalkyl-monoacylglycerol (MADAG) in the adrenal gland (PubMed:28420705).</text>
</comment>
<comment type="similarity">
    <text evidence="18">Belongs to the membrane-bound acyltransferase family. Sterol o-acyltransferase subfamily.</text>
</comment>
<accession>Q9Z2A7</accession>
<accession>Q9D7Q5</accession>
<dbReference type="EC" id="2.3.1.20" evidence="8 9"/>
<dbReference type="EC" id="2.3.1.76" evidence="8 9"/>
<dbReference type="EMBL" id="AF078752">
    <property type="protein sequence ID" value="AAC72917.1"/>
    <property type="molecule type" value="mRNA"/>
</dbReference>
<dbReference type="EMBL" id="AK008995">
    <property type="status" value="NOT_ANNOTATED_CDS"/>
    <property type="molecule type" value="mRNA"/>
</dbReference>
<dbReference type="EMBL" id="BC003717">
    <property type="protein sequence ID" value="AAH03717.1"/>
    <property type="molecule type" value="mRNA"/>
</dbReference>
<dbReference type="CCDS" id="CCDS27573.1"/>
<dbReference type="RefSeq" id="NP_034176.1">
    <property type="nucleotide sequence ID" value="NM_010046.4"/>
</dbReference>
<dbReference type="SMR" id="Q9Z2A7"/>
<dbReference type="BioGRID" id="199213">
    <property type="interactions" value="2"/>
</dbReference>
<dbReference type="FunCoup" id="Q9Z2A7">
    <property type="interactions" value="1057"/>
</dbReference>
<dbReference type="IntAct" id="Q9Z2A7">
    <property type="interactions" value="2"/>
</dbReference>
<dbReference type="STRING" id="10090.ENSMUSP00000023214"/>
<dbReference type="BindingDB" id="Q9Z2A7"/>
<dbReference type="ChEMBL" id="CHEMBL1075284"/>
<dbReference type="SwissLipids" id="SLP:000000302"/>
<dbReference type="iPTMnet" id="Q9Z2A7"/>
<dbReference type="PhosphoSitePlus" id="Q9Z2A7"/>
<dbReference type="SwissPalm" id="Q9Z2A7"/>
<dbReference type="jPOST" id="Q9Z2A7"/>
<dbReference type="PaxDb" id="10090-ENSMUSP00000023214"/>
<dbReference type="ProteomicsDB" id="277318"/>
<dbReference type="Pumba" id="Q9Z2A7"/>
<dbReference type="Antibodypedia" id="28443">
    <property type="antibodies" value="313 antibodies from 30 providers"/>
</dbReference>
<dbReference type="DNASU" id="13350"/>
<dbReference type="Ensembl" id="ENSMUST00000023214.11">
    <property type="protein sequence ID" value="ENSMUSP00000023214.5"/>
    <property type="gene ID" value="ENSMUSG00000022555.13"/>
</dbReference>
<dbReference type="GeneID" id="13350"/>
<dbReference type="KEGG" id="mmu:13350"/>
<dbReference type="UCSC" id="uc007wkn.1">
    <property type="organism name" value="mouse"/>
</dbReference>
<dbReference type="AGR" id="MGI:1333825"/>
<dbReference type="CTD" id="8694"/>
<dbReference type="MGI" id="MGI:1333825">
    <property type="gene designation" value="Dgat1"/>
</dbReference>
<dbReference type="VEuPathDB" id="HostDB:ENSMUSG00000022555"/>
<dbReference type="eggNOG" id="KOG0380">
    <property type="taxonomic scope" value="Eukaryota"/>
</dbReference>
<dbReference type="GeneTree" id="ENSGT00950000183081"/>
<dbReference type="HOGENOM" id="CLU_018190_0_0_1"/>
<dbReference type="InParanoid" id="Q9Z2A7"/>
<dbReference type="OMA" id="RCHDYRR"/>
<dbReference type="OrthoDB" id="10039049at2759"/>
<dbReference type="PhylomeDB" id="Q9Z2A7"/>
<dbReference type="TreeFam" id="TF314921"/>
<dbReference type="BRENDA" id="2.3.1.20">
    <property type="organism ID" value="3474"/>
</dbReference>
<dbReference type="Reactome" id="R-MMU-1482883">
    <property type="pathway name" value="Acyl chain remodeling of DAG and TAG"/>
</dbReference>
<dbReference type="Reactome" id="R-MMU-6798695">
    <property type="pathway name" value="Neutrophil degranulation"/>
</dbReference>
<dbReference type="Reactome" id="R-MMU-75109">
    <property type="pathway name" value="Triglyceride biosynthesis"/>
</dbReference>
<dbReference type="UniPathway" id="UPA00230"/>
<dbReference type="BioGRID-ORCS" id="13350">
    <property type="hits" value="7 hits in 80 CRISPR screens"/>
</dbReference>
<dbReference type="ChiTaRS" id="Dgat1">
    <property type="organism name" value="mouse"/>
</dbReference>
<dbReference type="PRO" id="PR:Q9Z2A7"/>
<dbReference type="Proteomes" id="UP000000589">
    <property type="component" value="Chromosome 15"/>
</dbReference>
<dbReference type="RNAct" id="Q9Z2A7">
    <property type="molecule type" value="protein"/>
</dbReference>
<dbReference type="Bgee" id="ENSMUSG00000022555">
    <property type="expression patterns" value="Expressed in granulocyte and 273 other cell types or tissues"/>
</dbReference>
<dbReference type="ExpressionAtlas" id="Q9Z2A7">
    <property type="expression patterns" value="baseline and differential"/>
</dbReference>
<dbReference type="GO" id="GO:0005789">
    <property type="term" value="C:endoplasmic reticulum membrane"/>
    <property type="evidence" value="ECO:0000314"/>
    <property type="project" value="MGI"/>
</dbReference>
<dbReference type="GO" id="GO:0043231">
    <property type="term" value="C:intracellular membrane-bounded organelle"/>
    <property type="evidence" value="ECO:0000315"/>
    <property type="project" value="BHF-UCL"/>
</dbReference>
<dbReference type="GO" id="GO:0016020">
    <property type="term" value="C:membrane"/>
    <property type="evidence" value="ECO:0000314"/>
    <property type="project" value="UniProtKB"/>
</dbReference>
<dbReference type="GO" id="GO:0003846">
    <property type="term" value="F:2-acylglycerol O-acyltransferase activity"/>
    <property type="evidence" value="ECO:0000314"/>
    <property type="project" value="MGI"/>
</dbReference>
<dbReference type="GO" id="GO:0004144">
    <property type="term" value="F:diacylglycerol O-acyltransferase activity"/>
    <property type="evidence" value="ECO:0000314"/>
    <property type="project" value="BHF-UCL"/>
</dbReference>
<dbReference type="GO" id="GO:0042802">
    <property type="term" value="F:identical protein binding"/>
    <property type="evidence" value="ECO:0007669"/>
    <property type="project" value="Ensembl"/>
</dbReference>
<dbReference type="GO" id="GO:0050252">
    <property type="term" value="F:retinol O-fatty-acyltransferase activity"/>
    <property type="evidence" value="ECO:0000315"/>
    <property type="project" value="MGI"/>
</dbReference>
<dbReference type="GO" id="GO:0046339">
    <property type="term" value="P:diacylglycerol metabolic process"/>
    <property type="evidence" value="ECO:0000314"/>
    <property type="project" value="BHF-UCL"/>
</dbReference>
<dbReference type="GO" id="GO:0055089">
    <property type="term" value="P:fatty acid homeostasis"/>
    <property type="evidence" value="ECO:0000315"/>
    <property type="project" value="UniProtKB"/>
</dbReference>
<dbReference type="GO" id="GO:0019915">
    <property type="term" value="P:lipid storage"/>
    <property type="evidence" value="ECO:0000315"/>
    <property type="project" value="UniProtKB"/>
</dbReference>
<dbReference type="GO" id="GO:0035336">
    <property type="term" value="P:long-chain fatty-acyl-CoA metabolic process"/>
    <property type="evidence" value="ECO:0000314"/>
    <property type="project" value="BHF-UCL"/>
</dbReference>
<dbReference type="GO" id="GO:0006640">
    <property type="term" value="P:monoacylglycerol biosynthetic process"/>
    <property type="evidence" value="ECO:0000315"/>
    <property type="project" value="UniProtKB"/>
</dbReference>
<dbReference type="GO" id="GO:0001523">
    <property type="term" value="P:retinoid metabolic process"/>
    <property type="evidence" value="ECO:0000315"/>
    <property type="project" value="MGI"/>
</dbReference>
<dbReference type="GO" id="GO:0019432">
    <property type="term" value="P:triglyceride biosynthetic process"/>
    <property type="evidence" value="ECO:0000314"/>
    <property type="project" value="BHF-UCL"/>
</dbReference>
<dbReference type="GO" id="GO:0034379">
    <property type="term" value="P:very-low-density lipoprotein particle assembly"/>
    <property type="evidence" value="ECO:0007669"/>
    <property type="project" value="Ensembl"/>
</dbReference>
<dbReference type="InterPro" id="IPR027251">
    <property type="entry name" value="Diacylglycerol_acylTrfase1"/>
</dbReference>
<dbReference type="InterPro" id="IPR004299">
    <property type="entry name" value="MBOAT_fam"/>
</dbReference>
<dbReference type="InterPro" id="IPR014371">
    <property type="entry name" value="Oat_ACAT_DAG_ARE"/>
</dbReference>
<dbReference type="PANTHER" id="PTHR10408:SF7">
    <property type="entry name" value="DIACYLGLYCEROL O-ACYLTRANSFERASE 1"/>
    <property type="match status" value="1"/>
</dbReference>
<dbReference type="PANTHER" id="PTHR10408">
    <property type="entry name" value="STEROL O-ACYLTRANSFERASE"/>
    <property type="match status" value="1"/>
</dbReference>
<dbReference type="Pfam" id="PF03062">
    <property type="entry name" value="MBOAT"/>
    <property type="match status" value="1"/>
</dbReference>
<dbReference type="PIRSF" id="PIRSF000439">
    <property type="entry name" value="Oat_ACAT_DAG_ARE"/>
    <property type="match status" value="1"/>
</dbReference>
<dbReference type="PIRSF" id="PIRSF500231">
    <property type="entry name" value="Oat_dag"/>
    <property type="match status" value="1"/>
</dbReference>